<comment type="function">
    <text evidence="2 3">Acts as a co-chaperone for HSP90AA1. Mediates the association of the molecular chaperones HSPA8/HSC70 and HSP90.</text>
</comment>
<comment type="subunit">
    <text evidence="2 3 7">Probably forms a complex composed of chaperones HSP90 and HSP70, co-chaperones STIP1/HOP, CDC37, PPP5C, PTGES3/p23, TSC1 and client protein TSC2 (By similarity). Forms a complex with HSPA8/HSC70, HSPCA/HSP-86 and HSPCB/HSP-84 (PubMed:8999875). Interacts with PACRG. Interacts with EEF1AKMT3 (By similarity). Interacts with HSP90/HSP90AA1; the interaction dissociates the PPP5C:HSP90AA1 interaction. Interacts with FLCN, FNIP1 and FNIP2. Interacts with HSPA8/HSC70 (By similarity). Interacts with HSP90AB1; upon SMYD2-dependent HSP90AB1 methylation (By similarity).</text>
</comment>
<comment type="subcellular location">
    <subcellularLocation>
        <location evidence="7">Cytoplasm</location>
    </subcellularLocation>
    <subcellularLocation>
        <location evidence="7">Nucleus</location>
    </subcellularLocation>
    <subcellularLocation>
        <location evidence="4">Dynein axonemal particle</location>
    </subcellularLocation>
</comment>
<comment type="domain">
    <text evidence="1">The TPR 1 repeat interacts with the C-terminal of HSC70. The TPR 4, 5 and 6 repeats (also called TPR2A domain) and TPR 7, 8 and 9 repeats (also called TPR2B domain) interact with HSP90 (By similarity).</text>
</comment>
<comment type="PTM">
    <text>In vitro kinase assay failed to detect phosphorylation by MAPKAPK2.</text>
</comment>
<sequence length="543" mass="62582">MEQVNELKEKGNKALSAGNIDDALQCYSEAIKLDPQNHVLYSNRSAAYAKKGDYQKAYEDGCKTVDLKPDWGKGYSRKAAALEFLNRFEEAKRTYEEGLKHEANNLQLKEGLQNMEARLAERKFMNPFNLPNLYQKLENDPRTRSLLSDPTYRELIEQLQNKPSDLGTKLQDPRVMTTLSVLLGVDLGSMDEEEEAATPPPPPPPKKEPKPEPMEEDLPENKKQALKEKELGNDAYKKKDFDKALKHYDRAKELDPTNMTYITNQAAVHFEKGDYNKCRELCEKAIEVGRENREDYRQIAKAYARIGNSYFKEEKYKDAIHFYNKSLAEHRTPDVLKKCQQAEKILKEQERLAYINPDLALEEKNKGNECFQKGDYPQAMKHYTEAIKRNPRDAKLYSNRAACYTKLLEFQLALKDCEECIQLEPTFIKGYTRKAAALEAMKDYTKAMDVYQKALDLDSSCKEAADGYQRCMMAQYNRHDSPEDVKRRAMADPEVQQIMSDPAMRLILEQMQKDPQALSEHLKNPVIAQKIQKLMDVGLIAIR</sequence>
<keyword id="KW-0007">Acetylation</keyword>
<keyword id="KW-0963">Cytoplasm</keyword>
<keyword id="KW-0903">Direct protein sequencing</keyword>
<keyword id="KW-1017">Isopeptide bond</keyword>
<keyword id="KW-0539">Nucleus</keyword>
<keyword id="KW-0597">Phosphoprotein</keyword>
<keyword id="KW-1185">Reference proteome</keyword>
<keyword id="KW-0677">Repeat</keyword>
<keyword id="KW-0802">TPR repeat</keyword>
<keyword id="KW-0832">Ubl conjugation</keyword>
<organism>
    <name type="scientific">Mus musculus</name>
    <name type="common">Mouse</name>
    <dbReference type="NCBI Taxonomy" id="10090"/>
    <lineage>
        <taxon>Eukaryota</taxon>
        <taxon>Metazoa</taxon>
        <taxon>Chordata</taxon>
        <taxon>Craniata</taxon>
        <taxon>Vertebrata</taxon>
        <taxon>Euteleostomi</taxon>
        <taxon>Mammalia</taxon>
        <taxon>Eutheria</taxon>
        <taxon>Euarchontoglires</taxon>
        <taxon>Glires</taxon>
        <taxon>Rodentia</taxon>
        <taxon>Myomorpha</taxon>
        <taxon>Muroidea</taxon>
        <taxon>Muridae</taxon>
        <taxon>Murinae</taxon>
        <taxon>Mus</taxon>
        <taxon>Mus</taxon>
    </lineage>
</organism>
<proteinExistence type="evidence at protein level"/>
<protein>
    <recommendedName>
        <fullName>Stress-induced-phosphoprotein 1</fullName>
        <shortName>STI1</shortName>
        <shortName>mSTI1</shortName>
    </recommendedName>
    <alternativeName>
        <fullName>Hsc70/Hsp90-organizing protein</fullName>
        <shortName>Hop</shortName>
    </alternativeName>
</protein>
<gene>
    <name type="primary">Stip1</name>
</gene>
<evidence type="ECO:0000250" key="1"/>
<evidence type="ECO:0000250" key="2">
    <source>
        <dbReference type="UniProtKB" id="O35814"/>
    </source>
</evidence>
<evidence type="ECO:0000250" key="3">
    <source>
        <dbReference type="UniProtKB" id="P31948"/>
    </source>
</evidence>
<evidence type="ECO:0000250" key="4">
    <source>
        <dbReference type="UniProtKB" id="Q7ZWU1"/>
    </source>
</evidence>
<evidence type="ECO:0000255" key="5"/>
<evidence type="ECO:0000256" key="6">
    <source>
        <dbReference type="SAM" id="MobiDB-lite"/>
    </source>
</evidence>
<evidence type="ECO:0000269" key="7">
    <source>
    </source>
</evidence>
<evidence type="ECO:0000269" key="8">
    <source ref="4"/>
</evidence>
<evidence type="ECO:0000305" key="9"/>
<evidence type="ECO:0007744" key="10">
    <source>
    </source>
</evidence>
<reference key="1">
    <citation type="journal article" date="1997" name="Gene">
        <title>Isolation of a mouse cDNA encoding mSTI1, a stress-inducible protein containing the TPR motif.</title>
        <authorList>
            <person name="Blatch G.L."/>
            <person name="Laessle M."/>
            <person name="Zetter B.R."/>
            <person name="Kundra V."/>
        </authorList>
    </citation>
    <scope>NUCLEOTIDE SEQUENCE [MRNA]</scope>
    <source>
        <tissue>Lung carcinoma</tissue>
    </source>
</reference>
<reference key="2">
    <citation type="journal article" date="2005" name="Science">
        <title>The transcriptional landscape of the mammalian genome.</title>
        <authorList>
            <person name="Carninci P."/>
            <person name="Kasukawa T."/>
            <person name="Katayama S."/>
            <person name="Gough J."/>
            <person name="Frith M.C."/>
            <person name="Maeda N."/>
            <person name="Oyama R."/>
            <person name="Ravasi T."/>
            <person name="Lenhard B."/>
            <person name="Wells C."/>
            <person name="Kodzius R."/>
            <person name="Shimokawa K."/>
            <person name="Bajic V.B."/>
            <person name="Brenner S.E."/>
            <person name="Batalov S."/>
            <person name="Forrest A.R."/>
            <person name="Zavolan M."/>
            <person name="Davis M.J."/>
            <person name="Wilming L.G."/>
            <person name="Aidinis V."/>
            <person name="Allen J.E."/>
            <person name="Ambesi-Impiombato A."/>
            <person name="Apweiler R."/>
            <person name="Aturaliya R.N."/>
            <person name="Bailey T.L."/>
            <person name="Bansal M."/>
            <person name="Baxter L."/>
            <person name="Beisel K.W."/>
            <person name="Bersano T."/>
            <person name="Bono H."/>
            <person name="Chalk A.M."/>
            <person name="Chiu K.P."/>
            <person name="Choudhary V."/>
            <person name="Christoffels A."/>
            <person name="Clutterbuck D.R."/>
            <person name="Crowe M.L."/>
            <person name="Dalla E."/>
            <person name="Dalrymple B.P."/>
            <person name="de Bono B."/>
            <person name="Della Gatta G."/>
            <person name="di Bernardo D."/>
            <person name="Down T."/>
            <person name="Engstrom P."/>
            <person name="Fagiolini M."/>
            <person name="Faulkner G."/>
            <person name="Fletcher C.F."/>
            <person name="Fukushima T."/>
            <person name="Furuno M."/>
            <person name="Futaki S."/>
            <person name="Gariboldi M."/>
            <person name="Georgii-Hemming P."/>
            <person name="Gingeras T.R."/>
            <person name="Gojobori T."/>
            <person name="Green R.E."/>
            <person name="Gustincich S."/>
            <person name="Harbers M."/>
            <person name="Hayashi Y."/>
            <person name="Hensch T.K."/>
            <person name="Hirokawa N."/>
            <person name="Hill D."/>
            <person name="Huminiecki L."/>
            <person name="Iacono M."/>
            <person name="Ikeo K."/>
            <person name="Iwama A."/>
            <person name="Ishikawa T."/>
            <person name="Jakt M."/>
            <person name="Kanapin A."/>
            <person name="Katoh M."/>
            <person name="Kawasawa Y."/>
            <person name="Kelso J."/>
            <person name="Kitamura H."/>
            <person name="Kitano H."/>
            <person name="Kollias G."/>
            <person name="Krishnan S.P."/>
            <person name="Kruger A."/>
            <person name="Kummerfeld S.K."/>
            <person name="Kurochkin I.V."/>
            <person name="Lareau L.F."/>
            <person name="Lazarevic D."/>
            <person name="Lipovich L."/>
            <person name="Liu J."/>
            <person name="Liuni S."/>
            <person name="McWilliam S."/>
            <person name="Madan Babu M."/>
            <person name="Madera M."/>
            <person name="Marchionni L."/>
            <person name="Matsuda H."/>
            <person name="Matsuzawa S."/>
            <person name="Miki H."/>
            <person name="Mignone F."/>
            <person name="Miyake S."/>
            <person name="Morris K."/>
            <person name="Mottagui-Tabar S."/>
            <person name="Mulder N."/>
            <person name="Nakano N."/>
            <person name="Nakauchi H."/>
            <person name="Ng P."/>
            <person name="Nilsson R."/>
            <person name="Nishiguchi S."/>
            <person name="Nishikawa S."/>
            <person name="Nori F."/>
            <person name="Ohara O."/>
            <person name="Okazaki Y."/>
            <person name="Orlando V."/>
            <person name="Pang K.C."/>
            <person name="Pavan W.J."/>
            <person name="Pavesi G."/>
            <person name="Pesole G."/>
            <person name="Petrovsky N."/>
            <person name="Piazza S."/>
            <person name="Reed J."/>
            <person name="Reid J.F."/>
            <person name="Ring B.Z."/>
            <person name="Ringwald M."/>
            <person name="Rost B."/>
            <person name="Ruan Y."/>
            <person name="Salzberg S.L."/>
            <person name="Sandelin A."/>
            <person name="Schneider C."/>
            <person name="Schoenbach C."/>
            <person name="Sekiguchi K."/>
            <person name="Semple C.A."/>
            <person name="Seno S."/>
            <person name="Sessa L."/>
            <person name="Sheng Y."/>
            <person name="Shibata Y."/>
            <person name="Shimada H."/>
            <person name="Shimada K."/>
            <person name="Silva D."/>
            <person name="Sinclair B."/>
            <person name="Sperling S."/>
            <person name="Stupka E."/>
            <person name="Sugiura K."/>
            <person name="Sultana R."/>
            <person name="Takenaka Y."/>
            <person name="Taki K."/>
            <person name="Tammoja K."/>
            <person name="Tan S.L."/>
            <person name="Tang S."/>
            <person name="Taylor M.S."/>
            <person name="Tegner J."/>
            <person name="Teichmann S.A."/>
            <person name="Ueda H.R."/>
            <person name="van Nimwegen E."/>
            <person name="Verardo R."/>
            <person name="Wei C.L."/>
            <person name="Yagi K."/>
            <person name="Yamanishi H."/>
            <person name="Zabarovsky E."/>
            <person name="Zhu S."/>
            <person name="Zimmer A."/>
            <person name="Hide W."/>
            <person name="Bult C."/>
            <person name="Grimmond S.M."/>
            <person name="Teasdale R.D."/>
            <person name="Liu E.T."/>
            <person name="Brusic V."/>
            <person name="Quackenbush J."/>
            <person name="Wahlestedt C."/>
            <person name="Mattick J.S."/>
            <person name="Hume D.A."/>
            <person name="Kai C."/>
            <person name="Sasaki D."/>
            <person name="Tomaru Y."/>
            <person name="Fukuda S."/>
            <person name="Kanamori-Katayama M."/>
            <person name="Suzuki M."/>
            <person name="Aoki J."/>
            <person name="Arakawa T."/>
            <person name="Iida J."/>
            <person name="Imamura K."/>
            <person name="Itoh M."/>
            <person name="Kato T."/>
            <person name="Kawaji H."/>
            <person name="Kawagashira N."/>
            <person name="Kawashima T."/>
            <person name="Kojima M."/>
            <person name="Kondo S."/>
            <person name="Konno H."/>
            <person name="Nakano K."/>
            <person name="Ninomiya N."/>
            <person name="Nishio T."/>
            <person name="Okada M."/>
            <person name="Plessy C."/>
            <person name="Shibata K."/>
            <person name="Shiraki T."/>
            <person name="Suzuki S."/>
            <person name="Tagami M."/>
            <person name="Waki K."/>
            <person name="Watahiki A."/>
            <person name="Okamura-Oho Y."/>
            <person name="Suzuki H."/>
            <person name="Kawai J."/>
            <person name="Hayashizaki Y."/>
        </authorList>
    </citation>
    <scope>NUCLEOTIDE SEQUENCE [LARGE SCALE MRNA]</scope>
    <source>
        <strain>C57BL/6J</strain>
        <strain>NOD</strain>
        <tissue>Embryo</tissue>
        <tissue>Liver</tissue>
        <tissue>Thymus</tissue>
    </source>
</reference>
<reference key="3">
    <citation type="journal article" date="2004" name="Genome Res.">
        <title>The status, quality, and expansion of the NIH full-length cDNA project: the Mammalian Gene Collection (MGC).</title>
        <authorList>
            <consortium name="The MGC Project Team"/>
        </authorList>
    </citation>
    <scope>NUCLEOTIDE SEQUENCE [LARGE SCALE MRNA]</scope>
    <source>
        <strain>Czech II</strain>
        <tissue>Mammary tumor</tissue>
    </source>
</reference>
<reference key="4">
    <citation type="submission" date="2009-05" db="UniProtKB">
        <authorList>
            <person name="Bienvenut W.V."/>
            <person name="Frezza C."/>
            <person name="Gottlieb E."/>
        </authorList>
    </citation>
    <scope>PROTEIN SEQUENCE OF 1-10; 94-109; 124-136; 145-169; 306-315; 352-364; 435-446; 506-513 AND 534-543</scope>
    <scope>ACETYLATION AT MET-1</scope>
    <scope>IDENTIFICATION BY MASS SPECTROMETRY</scope>
    <source>
        <tissue>Kidney</tissue>
    </source>
</reference>
<reference key="5">
    <citation type="submission" date="2007-03" db="UniProtKB">
        <authorList>
            <person name="Lubec G."/>
            <person name="Klug S."/>
        </authorList>
    </citation>
    <scope>PROTEIN SEQUENCE OF 14-44</scope>
    <scope>IDENTIFICATION BY MASS SPECTROMETRY</scope>
    <source>
        <tissue>Hippocampus</tissue>
    </source>
</reference>
<reference key="6">
    <citation type="journal article" date="1997" name="J. Biol. Chem.">
        <title>Stress-inducible, murine protein mSTI1. Characterization of binding domains for heat shock proteins and in vitro phosphorylation by different kinases.</title>
        <authorList>
            <person name="Laessle M."/>
            <person name="Blatch G.L."/>
            <person name="Kundra V."/>
            <person name="Takatori T."/>
            <person name="Zetter B.R."/>
        </authorList>
    </citation>
    <scope>SUBCELLULAR LOCATION</scope>
    <scope>IDENTIFICATION IN A COMPLEX WITH HSPA8; HSPCA AND HSPCB</scope>
</reference>
<reference key="7">
    <citation type="journal article" date="2010" name="Cell">
        <title>A tissue-specific atlas of mouse protein phosphorylation and expression.</title>
        <authorList>
            <person name="Huttlin E.L."/>
            <person name="Jedrychowski M.P."/>
            <person name="Elias J.E."/>
            <person name="Goswami T."/>
            <person name="Rad R."/>
            <person name="Beausoleil S.A."/>
            <person name="Villen J."/>
            <person name="Haas W."/>
            <person name="Sowa M.E."/>
            <person name="Gygi S.P."/>
        </authorList>
    </citation>
    <scope>IDENTIFICATION BY MASS SPECTROMETRY [LARGE SCALE ANALYSIS]</scope>
    <source>
        <tissue>Brain</tissue>
        <tissue>Brown adipose tissue</tissue>
        <tissue>Heart</tissue>
        <tissue>Kidney</tissue>
        <tissue>Liver</tissue>
        <tissue>Lung</tissue>
        <tissue>Pancreas</tissue>
        <tissue>Spleen</tissue>
        <tissue>Testis</tissue>
    </source>
</reference>
<reference key="8">
    <citation type="journal article" date="2013" name="Mol. Cell">
        <title>SIRT5-mediated lysine desuccinylation impacts diverse metabolic pathways.</title>
        <authorList>
            <person name="Park J."/>
            <person name="Chen Y."/>
            <person name="Tishkoff D.X."/>
            <person name="Peng C."/>
            <person name="Tan M."/>
            <person name="Dai L."/>
            <person name="Xie Z."/>
            <person name="Zhang Y."/>
            <person name="Zwaans B.M."/>
            <person name="Skinner M.E."/>
            <person name="Lombard D.B."/>
            <person name="Zhao Y."/>
        </authorList>
    </citation>
    <scope>ACETYLATION [LARGE SCALE ANALYSIS] AT LYS-325</scope>
    <scope>IDENTIFICATION BY MASS SPECTROMETRY [LARGE SCALE ANALYSIS]</scope>
    <source>
        <tissue>Embryonic fibroblast</tissue>
    </source>
</reference>
<feature type="chain" id="PRO_0000106373" description="Stress-induced-phosphoprotein 1">
    <location>
        <begin position="1"/>
        <end position="543"/>
    </location>
</feature>
<feature type="repeat" description="TPR 1">
    <location>
        <begin position="4"/>
        <end position="37"/>
    </location>
</feature>
<feature type="repeat" description="TPR 2">
    <location>
        <begin position="39"/>
        <end position="71"/>
    </location>
</feature>
<feature type="repeat" description="TPR 3">
    <location>
        <begin position="73"/>
        <end position="105"/>
    </location>
</feature>
<feature type="domain" description="STI1 1">
    <location>
        <begin position="130"/>
        <end position="169"/>
    </location>
</feature>
<feature type="repeat" description="TPR 4">
    <location>
        <begin position="225"/>
        <end position="258"/>
    </location>
</feature>
<feature type="repeat" description="TPR 5">
    <location>
        <begin position="260"/>
        <end position="292"/>
    </location>
</feature>
<feature type="repeat" description="TPR 6">
    <location>
        <begin position="300"/>
        <end position="333"/>
    </location>
</feature>
<feature type="repeat" description="TPR 7">
    <location>
        <begin position="360"/>
        <end position="393"/>
    </location>
</feature>
<feature type="repeat" description="TPR 8">
    <location>
        <begin position="395"/>
        <end position="427"/>
    </location>
</feature>
<feature type="repeat" description="TPR 9">
    <location>
        <begin position="428"/>
        <end position="461"/>
    </location>
</feature>
<feature type="domain" description="STI1 2">
    <location>
        <begin position="492"/>
        <end position="531"/>
    </location>
</feature>
<feature type="region of interest" description="Disordered" evidence="6">
    <location>
        <begin position="191"/>
        <end position="233"/>
    </location>
</feature>
<feature type="short sequence motif" description="Bipartite nuclear localization signal" evidence="5">
    <location>
        <begin position="222"/>
        <end position="239"/>
    </location>
</feature>
<feature type="compositionally biased region" description="Basic and acidic residues" evidence="6">
    <location>
        <begin position="205"/>
        <end position="233"/>
    </location>
</feature>
<feature type="modified residue" description="N-acetylmethionine" evidence="8">
    <location>
        <position position="1"/>
    </location>
</feature>
<feature type="modified residue" description="N6-acetyllysine" evidence="3">
    <location>
        <position position="8"/>
    </location>
</feature>
<feature type="modified residue" description="Phosphoserine" evidence="3">
    <location>
        <position position="16"/>
    </location>
</feature>
<feature type="modified residue" description="Phosphothreonine" evidence="3">
    <location>
        <position position="198"/>
    </location>
</feature>
<feature type="modified residue" description="N6-acetyllysine" evidence="3">
    <location>
        <position position="301"/>
    </location>
</feature>
<feature type="modified residue" description="N6-acetyllysine" evidence="3">
    <location>
        <position position="312"/>
    </location>
</feature>
<feature type="modified residue" description="N6-acetyllysine" evidence="10">
    <location>
        <position position="325"/>
    </location>
</feature>
<feature type="modified residue" description="Phosphothreonine" evidence="3">
    <location>
        <position position="332"/>
    </location>
</feature>
<feature type="modified residue" description="N6-acetyllysine" evidence="3">
    <location>
        <position position="344"/>
    </location>
</feature>
<feature type="modified residue" description="Phosphotyrosine" evidence="3">
    <location>
        <position position="354"/>
    </location>
</feature>
<feature type="modified residue" description="N6-acetyllysine" evidence="3">
    <location>
        <position position="446"/>
    </location>
</feature>
<feature type="modified residue" description="Phosphoserine" evidence="3">
    <location>
        <position position="481"/>
    </location>
</feature>
<feature type="cross-link" description="Glycyl lysine isopeptide (Lys-Gly) (interchain with G-Cter in SUMO1); alternate" evidence="3">
    <location>
        <position position="123"/>
    </location>
</feature>
<feature type="cross-link" description="Glycyl lysine isopeptide (Lys-Gly) (interchain with G-Cter in SUMO2); alternate" evidence="3">
    <location>
        <position position="123"/>
    </location>
</feature>
<feature type="cross-link" description="Glycyl lysine isopeptide (Lys-Gly) (interchain with G-Cter in SUMO1); alternate" evidence="3">
    <location>
        <position position="210"/>
    </location>
</feature>
<feature type="cross-link" description="Glycyl lysine isopeptide (Lys-Gly) (interchain with G-Cter in SUMO2); alternate" evidence="3">
    <location>
        <position position="210"/>
    </location>
</feature>
<feature type="sequence conflict" description="In Ref. 2; BAC36100." evidence="9" ref="2">
    <original>L</original>
    <variation>P</variation>
    <location>
        <position position="15"/>
    </location>
</feature>
<feature type="sequence conflict" description="In Ref. 3; AAH03794." evidence="9" ref="3">
    <original>L</original>
    <variation>V</variation>
    <location>
        <position position="106"/>
    </location>
</feature>
<feature type="sequence conflict" description="In Ref. 2; BAC36100." evidence="9" ref="2">
    <original>DYNKCR</original>
    <variation>RLYKCT</variation>
    <location>
        <begin position="274"/>
        <end position="279"/>
    </location>
</feature>
<feature type="sequence conflict" description="In Ref. 2; BAC36100." evidence="9" ref="2">
    <original>V</original>
    <variation>S</variation>
    <location>
        <position position="288"/>
    </location>
</feature>
<feature type="sequence conflict" description="In Ref. 2; BAC36100." evidence="9" ref="2">
    <original>RIGNSY</original>
    <variation>PNWQFL</variation>
    <location>
        <begin position="305"/>
        <end position="310"/>
    </location>
</feature>
<feature type="sequence conflict" description="In Ref. 2; BAC36100." evidence="9" ref="2">
    <original>YK</original>
    <variation>VQ</variation>
    <location>
        <begin position="316"/>
        <end position="317"/>
    </location>
</feature>
<feature type="sequence conflict" description="In Ref. 2; BAC36100." evidence="9" ref="2">
    <original>PDVLKKCQQAEKILK</original>
    <variation>QMCSRSASSQRNSE</variation>
    <location>
        <begin position="333"/>
        <end position="347"/>
    </location>
</feature>
<accession>Q60864</accession>
<accession>Q3TT16</accession>
<accession>Q8BPH3</accession>
<accession>Q99L66</accession>
<dbReference type="EMBL" id="U27830">
    <property type="protein sequence ID" value="AAC53267.1"/>
    <property type="molecule type" value="mRNA"/>
</dbReference>
<dbReference type="EMBL" id="AK075988">
    <property type="protein sequence ID" value="BAC36100.1"/>
    <property type="molecule type" value="mRNA"/>
</dbReference>
<dbReference type="EMBL" id="AK088494">
    <property type="protein sequence ID" value="BAC40389.1"/>
    <property type="molecule type" value="mRNA"/>
</dbReference>
<dbReference type="EMBL" id="AK149493">
    <property type="protein sequence ID" value="BAE28916.1"/>
    <property type="molecule type" value="mRNA"/>
</dbReference>
<dbReference type="EMBL" id="AK161645">
    <property type="protein sequence ID" value="BAE36509.1"/>
    <property type="molecule type" value="mRNA"/>
</dbReference>
<dbReference type="EMBL" id="AK167273">
    <property type="protein sequence ID" value="BAE39385.1"/>
    <property type="molecule type" value="mRNA"/>
</dbReference>
<dbReference type="EMBL" id="BC003794">
    <property type="protein sequence ID" value="AAH03794.1"/>
    <property type="molecule type" value="mRNA"/>
</dbReference>
<dbReference type="CCDS" id="CCDS37901.1"/>
<dbReference type="RefSeq" id="NP_058017.1">
    <property type="nucleotide sequence ID" value="NM_016737.2"/>
</dbReference>
<dbReference type="SMR" id="Q60864"/>
<dbReference type="BioGRID" id="203539">
    <property type="interactions" value="30"/>
</dbReference>
<dbReference type="FunCoup" id="Q60864">
    <property type="interactions" value="2173"/>
</dbReference>
<dbReference type="IntAct" id="Q60864">
    <property type="interactions" value="7"/>
</dbReference>
<dbReference type="MINT" id="Q60864"/>
<dbReference type="STRING" id="10090.ENSMUSP00000025918"/>
<dbReference type="GlyGen" id="Q60864">
    <property type="glycosylation" value="1 site, 1 O-linked glycan (1 site)"/>
</dbReference>
<dbReference type="iPTMnet" id="Q60864"/>
<dbReference type="MetOSite" id="Q60864"/>
<dbReference type="PhosphoSitePlus" id="Q60864"/>
<dbReference type="SwissPalm" id="Q60864"/>
<dbReference type="REPRODUCTION-2DPAGE" id="IPI00121514"/>
<dbReference type="REPRODUCTION-2DPAGE" id="Q60864"/>
<dbReference type="CPTAC" id="non-CPTAC-3673"/>
<dbReference type="CPTAC" id="non-CPTAC-3674"/>
<dbReference type="jPOST" id="Q60864"/>
<dbReference type="PaxDb" id="10090-ENSMUSP00000025918"/>
<dbReference type="PeptideAtlas" id="Q60864"/>
<dbReference type="ProteomicsDB" id="258755"/>
<dbReference type="Pumba" id="Q60864"/>
<dbReference type="Antibodypedia" id="15273">
    <property type="antibodies" value="438 antibodies from 40 providers"/>
</dbReference>
<dbReference type="DNASU" id="20867"/>
<dbReference type="Ensembl" id="ENSMUST00000025918.9">
    <property type="protein sequence ID" value="ENSMUSP00000025918.8"/>
    <property type="gene ID" value="ENSMUSG00000024966.10"/>
</dbReference>
<dbReference type="GeneID" id="20867"/>
<dbReference type="KEGG" id="mmu:20867"/>
<dbReference type="UCSC" id="uc008gke.2">
    <property type="organism name" value="mouse"/>
</dbReference>
<dbReference type="AGR" id="MGI:109130"/>
<dbReference type="CTD" id="10963"/>
<dbReference type="MGI" id="MGI:109130">
    <property type="gene designation" value="Stip1"/>
</dbReference>
<dbReference type="VEuPathDB" id="HostDB:ENSMUSG00000024966"/>
<dbReference type="eggNOG" id="KOG0548">
    <property type="taxonomic scope" value="Eukaryota"/>
</dbReference>
<dbReference type="GeneTree" id="ENSGT00940000154911"/>
<dbReference type="HOGENOM" id="CLU_000134_46_5_1"/>
<dbReference type="InParanoid" id="Q60864"/>
<dbReference type="OMA" id="MYSAREN"/>
<dbReference type="OrthoDB" id="2423701at2759"/>
<dbReference type="PhylomeDB" id="Q60864"/>
<dbReference type="TreeFam" id="TF300478"/>
<dbReference type="Reactome" id="R-MMU-3371497">
    <property type="pathway name" value="HSP90 chaperone cycle for steroid hormone receptors (SHR) in the presence of ligand"/>
</dbReference>
<dbReference type="Reactome" id="R-MMU-9696273">
    <property type="pathway name" value="RND1 GTPase cycle"/>
</dbReference>
<dbReference type="BioGRID-ORCS" id="20867">
    <property type="hits" value="18 hits in 78 CRISPR screens"/>
</dbReference>
<dbReference type="ChiTaRS" id="Stip1">
    <property type="organism name" value="mouse"/>
</dbReference>
<dbReference type="PRO" id="PR:Q60864"/>
<dbReference type="Proteomes" id="UP000000589">
    <property type="component" value="Chromosome 19"/>
</dbReference>
<dbReference type="RNAct" id="Q60864">
    <property type="molecule type" value="protein"/>
</dbReference>
<dbReference type="Bgee" id="ENSMUSG00000024966">
    <property type="expression patterns" value="Expressed in morula and 271 other cell types or tissues"/>
</dbReference>
<dbReference type="GO" id="GO:0005829">
    <property type="term" value="C:cytosol"/>
    <property type="evidence" value="ECO:0000304"/>
    <property type="project" value="Reactome"/>
</dbReference>
<dbReference type="GO" id="GO:0120293">
    <property type="term" value="C:dynein axonemal particle"/>
    <property type="evidence" value="ECO:0000250"/>
    <property type="project" value="UniProtKB"/>
</dbReference>
<dbReference type="GO" id="GO:0043209">
    <property type="term" value="C:myelin sheath"/>
    <property type="evidence" value="ECO:0007005"/>
    <property type="project" value="UniProtKB"/>
</dbReference>
<dbReference type="GO" id="GO:0005634">
    <property type="term" value="C:nucleus"/>
    <property type="evidence" value="ECO:0000353"/>
    <property type="project" value="MGI"/>
</dbReference>
<dbReference type="GO" id="GO:0101031">
    <property type="term" value="C:protein folding chaperone complex"/>
    <property type="evidence" value="ECO:0007669"/>
    <property type="project" value="Ensembl"/>
</dbReference>
<dbReference type="GO" id="GO:0051879">
    <property type="term" value="F:Hsp90 protein binding"/>
    <property type="evidence" value="ECO:0007669"/>
    <property type="project" value="Ensembl"/>
</dbReference>
<dbReference type="GO" id="GO:0098761">
    <property type="term" value="P:cellular response to interleukin-7"/>
    <property type="evidence" value="ECO:0000314"/>
    <property type="project" value="MGI"/>
</dbReference>
<dbReference type="FunFam" id="1.10.260.100:FF:000004">
    <property type="entry name" value="Putative stress-induced-phosphoprotein 1"/>
    <property type="match status" value="1"/>
</dbReference>
<dbReference type="FunFam" id="1.25.40.10:FF:000010">
    <property type="entry name" value="Stress-induced phosphoprotein 1"/>
    <property type="match status" value="1"/>
</dbReference>
<dbReference type="FunFam" id="1.25.40.10:FF:000020">
    <property type="entry name" value="Stress-induced phosphoprotein 1"/>
    <property type="match status" value="1"/>
</dbReference>
<dbReference type="FunFam" id="1.10.260.100:FF:000002">
    <property type="entry name" value="Stress-induced-phosphoprotein 1 (Hsp70/Hsp90-organizing)"/>
    <property type="match status" value="1"/>
</dbReference>
<dbReference type="FunFam" id="1.25.40.10:FF:000027">
    <property type="entry name" value="stress-induced-phosphoprotein 1 isoform X1"/>
    <property type="match status" value="1"/>
</dbReference>
<dbReference type="Gene3D" id="1.10.260.100">
    <property type="match status" value="2"/>
</dbReference>
<dbReference type="Gene3D" id="1.25.40.10">
    <property type="entry name" value="Tetratricopeptide repeat domain"/>
    <property type="match status" value="3"/>
</dbReference>
<dbReference type="InterPro" id="IPR041243">
    <property type="entry name" value="STI1/HOP_DP"/>
</dbReference>
<dbReference type="InterPro" id="IPR006636">
    <property type="entry name" value="STI1_HS-bd"/>
</dbReference>
<dbReference type="InterPro" id="IPR011990">
    <property type="entry name" value="TPR-like_helical_dom_sf"/>
</dbReference>
<dbReference type="InterPro" id="IPR019734">
    <property type="entry name" value="TPR_rpt"/>
</dbReference>
<dbReference type="PANTHER" id="PTHR22904:SF523">
    <property type="entry name" value="STRESS-INDUCED-PHOSPHOPROTEIN 1"/>
    <property type="match status" value="1"/>
</dbReference>
<dbReference type="PANTHER" id="PTHR22904">
    <property type="entry name" value="TPR REPEAT CONTAINING PROTEIN"/>
    <property type="match status" value="1"/>
</dbReference>
<dbReference type="Pfam" id="PF17830">
    <property type="entry name" value="STI1-HOP_DP"/>
    <property type="match status" value="2"/>
</dbReference>
<dbReference type="Pfam" id="PF00515">
    <property type="entry name" value="TPR_1"/>
    <property type="match status" value="1"/>
</dbReference>
<dbReference type="Pfam" id="PF13414">
    <property type="entry name" value="TPR_11"/>
    <property type="match status" value="2"/>
</dbReference>
<dbReference type="Pfam" id="PF13424">
    <property type="entry name" value="TPR_12"/>
    <property type="match status" value="1"/>
</dbReference>
<dbReference type="Pfam" id="PF13181">
    <property type="entry name" value="TPR_8"/>
    <property type="match status" value="1"/>
</dbReference>
<dbReference type="SMART" id="SM00727">
    <property type="entry name" value="STI1"/>
    <property type="match status" value="2"/>
</dbReference>
<dbReference type="SMART" id="SM00028">
    <property type="entry name" value="TPR"/>
    <property type="match status" value="9"/>
</dbReference>
<dbReference type="SUPFAM" id="SSF48452">
    <property type="entry name" value="TPR-like"/>
    <property type="match status" value="3"/>
</dbReference>
<dbReference type="PROSITE" id="PS50005">
    <property type="entry name" value="TPR"/>
    <property type="match status" value="9"/>
</dbReference>
<dbReference type="PROSITE" id="PS50293">
    <property type="entry name" value="TPR_REGION"/>
    <property type="match status" value="2"/>
</dbReference>
<name>STIP1_MOUSE</name>